<protein>
    <recommendedName>
        <fullName evidence="4">Acyl-lipid (9-3)-desaturase</fullName>
        <shortName evidence="4">BoDes6</shortName>
        <ecNumber evidence="3">1.14.19.47</ecNumber>
    </recommendedName>
</protein>
<evidence type="ECO:0000255" key="1"/>
<evidence type="ECO:0000255" key="2">
    <source>
        <dbReference type="PROSITE-ProRule" id="PRU00279"/>
    </source>
</evidence>
<evidence type="ECO:0000269" key="3">
    <source>
    </source>
</evidence>
<evidence type="ECO:0000303" key="4">
    <source>
    </source>
</evidence>
<evidence type="ECO:0000305" key="5"/>
<evidence type="ECO:0000305" key="6">
    <source>
    </source>
</evidence>
<evidence type="ECO:0000312" key="7">
    <source>
        <dbReference type="EMBL" id="AAC49700.1"/>
    </source>
</evidence>
<comment type="function">
    <text evidence="3">Fatty acid desaturase able to introduce a delta(6)-double bond into delta(9)-unsaturated fatty-acid substrates. Can use both linoleic acid (18:2(9Z,12Z)) and alpha-linolenic acid (18:3(9Z,12Z,15Z)) as substrates.</text>
</comment>
<comment type="catalytic activity">
    <reaction evidence="3">
        <text>(9Z,12Z,15Z)-octadecatrienoyl-containing glycerolipid + 2 Fe(II)-[cytochrome b5] + O2 + 2 H(+) = (6Z,9Z,12Z,15Z)-octadecatetraenoyl-containing glycerolipid + 2 Fe(III)-[cytochrome b5] + 2 H2O</text>
        <dbReference type="Rhea" id="RHEA:46288"/>
        <dbReference type="Rhea" id="RHEA-COMP:10438"/>
        <dbReference type="Rhea" id="RHEA-COMP:10439"/>
        <dbReference type="ChEBI" id="CHEBI:15377"/>
        <dbReference type="ChEBI" id="CHEBI:15378"/>
        <dbReference type="ChEBI" id="CHEBI:15379"/>
        <dbReference type="ChEBI" id="CHEBI:29033"/>
        <dbReference type="ChEBI" id="CHEBI:29034"/>
        <dbReference type="ChEBI" id="CHEBI:90078"/>
        <dbReference type="ChEBI" id="CHEBI:90079"/>
        <dbReference type="EC" id="1.14.19.47"/>
    </reaction>
</comment>
<comment type="catalytic activity">
    <reaction evidence="3">
        <text>a (9Z,12Z)-octadecadienoyl-containing glycerolipid + 2 Fe(II)-[cytochrome b5] + O2 + 2 H(+) = (6Z,9Z,12Z)-octadecatrienoyl-containing glycerolipid + 2 Fe(III)-[cytochrome b5] + 2 H2O</text>
        <dbReference type="Rhea" id="RHEA:46284"/>
        <dbReference type="Rhea" id="RHEA-COMP:10438"/>
        <dbReference type="Rhea" id="RHEA-COMP:10439"/>
        <dbReference type="ChEBI" id="CHEBI:15377"/>
        <dbReference type="ChEBI" id="CHEBI:15378"/>
        <dbReference type="ChEBI" id="CHEBI:15379"/>
        <dbReference type="ChEBI" id="CHEBI:29033"/>
        <dbReference type="ChEBI" id="CHEBI:29034"/>
        <dbReference type="ChEBI" id="CHEBI:88351"/>
        <dbReference type="ChEBI" id="CHEBI:90081"/>
        <dbReference type="EC" id="1.14.19.47"/>
    </reaction>
</comment>
<comment type="pathway">
    <text evidence="3">Lipid metabolism; polyunsaturated fatty acid biosynthesis.</text>
</comment>
<comment type="subcellular location">
    <subcellularLocation>
        <location evidence="6">Endoplasmic reticulum membrane</location>
        <topology evidence="1">Multi-pass membrane protein</topology>
    </subcellularLocation>
</comment>
<comment type="domain">
    <text evidence="5">The histidine box domains may contain the active site and/or be involved in metal ion binding.</text>
</comment>
<comment type="similarity">
    <text evidence="5">Belongs to the fatty acid desaturase type 1 family.</text>
</comment>
<dbReference type="EC" id="1.14.19.47" evidence="3"/>
<dbReference type="EMBL" id="U79010">
    <property type="protein sequence ID" value="AAC49700.1"/>
    <property type="molecule type" value="mRNA"/>
</dbReference>
<dbReference type="SMR" id="O04353"/>
<dbReference type="KEGG" id="ag:AAC49700"/>
<dbReference type="BioCyc" id="MetaCyc:MONOMER-14126"/>
<dbReference type="BRENDA" id="1.14.19.3">
    <property type="organism ID" value="895"/>
</dbReference>
<dbReference type="BRENDA" id="1.14.19.47">
    <property type="organism ID" value="895"/>
</dbReference>
<dbReference type="UniPathway" id="UPA00658"/>
<dbReference type="GO" id="GO:0005789">
    <property type="term" value="C:endoplasmic reticulum membrane"/>
    <property type="evidence" value="ECO:0007669"/>
    <property type="project" value="UniProtKB-SubCell"/>
</dbReference>
<dbReference type="GO" id="GO:0046872">
    <property type="term" value="F:metal ion binding"/>
    <property type="evidence" value="ECO:0007669"/>
    <property type="project" value="UniProtKB-KW"/>
</dbReference>
<dbReference type="GO" id="GO:0016717">
    <property type="term" value="F:oxidoreductase activity, acting on paired donors, with oxidation of a pair of donors resulting in the reduction of molecular oxygen to two molecules of water"/>
    <property type="evidence" value="ECO:0007669"/>
    <property type="project" value="TreeGrafter"/>
</dbReference>
<dbReference type="GO" id="GO:0006636">
    <property type="term" value="P:unsaturated fatty acid biosynthetic process"/>
    <property type="evidence" value="ECO:0007669"/>
    <property type="project" value="UniProtKB-UniPathway"/>
</dbReference>
<dbReference type="CDD" id="cd03506">
    <property type="entry name" value="Delta6-FADS-like"/>
    <property type="match status" value="1"/>
</dbReference>
<dbReference type="Gene3D" id="3.10.120.10">
    <property type="entry name" value="Cytochrome b5-like heme/steroid binding domain"/>
    <property type="match status" value="1"/>
</dbReference>
<dbReference type="InterPro" id="IPR001199">
    <property type="entry name" value="Cyt_B5-like_heme/steroid-bd"/>
</dbReference>
<dbReference type="InterPro" id="IPR036400">
    <property type="entry name" value="Cyt_B5-like_heme/steroid_sf"/>
</dbReference>
<dbReference type="InterPro" id="IPR005804">
    <property type="entry name" value="FA_desaturase_dom"/>
</dbReference>
<dbReference type="InterPro" id="IPR012171">
    <property type="entry name" value="Fatty_acid_desaturase"/>
</dbReference>
<dbReference type="PANTHER" id="PTHR19353:SF30">
    <property type="entry name" value="DELTA 8-(E)-SPHINGOLIPID DESATURASE"/>
    <property type="match status" value="1"/>
</dbReference>
<dbReference type="PANTHER" id="PTHR19353">
    <property type="entry name" value="FATTY ACID DESATURASE 2"/>
    <property type="match status" value="1"/>
</dbReference>
<dbReference type="Pfam" id="PF00173">
    <property type="entry name" value="Cyt-b5"/>
    <property type="match status" value="1"/>
</dbReference>
<dbReference type="Pfam" id="PF00487">
    <property type="entry name" value="FA_desaturase"/>
    <property type="match status" value="1"/>
</dbReference>
<dbReference type="PIRSF" id="PIRSF015921">
    <property type="entry name" value="FA_sphinglp_des"/>
    <property type="match status" value="1"/>
</dbReference>
<dbReference type="SMART" id="SM01117">
    <property type="entry name" value="Cyt-b5"/>
    <property type="match status" value="1"/>
</dbReference>
<dbReference type="SUPFAM" id="SSF55856">
    <property type="entry name" value="Cytochrome b5-like heme/steroid binding domain"/>
    <property type="match status" value="1"/>
</dbReference>
<dbReference type="PROSITE" id="PS50255">
    <property type="entry name" value="CYTOCHROME_B5_2"/>
    <property type="match status" value="1"/>
</dbReference>
<accession>O04353</accession>
<reference key="1">
    <citation type="journal article" date="1997" name="Proc. Natl. Acad. Sci. U.S.A.">
        <title>Expression of a borage desaturase cDNA containing an N-terminal cytochrome b5 domain results in the accumulation of high levels of delta6-desaturated fatty acids in transgenic tobacco.</title>
        <authorList>
            <person name="Sayanova O."/>
            <person name="Smith M.A."/>
            <person name="Lapinskas P.A."/>
            <person name="Stobart K."/>
            <person name="Dobson G."/>
            <person name="Christie W.W."/>
            <person name="Shewry P.R."/>
            <person name="Napier J.A."/>
        </authorList>
    </citation>
    <scope>NUCLEOTIDE SEQUENCE [MRNA]</scope>
    <scope>FUNCTION</scope>
    <scope>PATHWAY</scope>
    <scope>CATALYTIC ACTIVITY</scope>
</reference>
<organism evidence="7">
    <name type="scientific">Borago officinalis</name>
    <name type="common">Bourrache</name>
    <name type="synonym">Borage</name>
    <dbReference type="NCBI Taxonomy" id="13363"/>
    <lineage>
        <taxon>Eukaryota</taxon>
        <taxon>Viridiplantae</taxon>
        <taxon>Streptophyta</taxon>
        <taxon>Embryophyta</taxon>
        <taxon>Tracheophyta</taxon>
        <taxon>Spermatophyta</taxon>
        <taxon>Magnoliopsida</taxon>
        <taxon>eudicotyledons</taxon>
        <taxon>Gunneridae</taxon>
        <taxon>Pentapetalae</taxon>
        <taxon>asterids</taxon>
        <taxon>lamiids</taxon>
        <taxon>Boraginales</taxon>
        <taxon>Boraginaceae</taxon>
        <taxon>Boraginoideae</taxon>
        <taxon>Boragineae</taxon>
        <taxon>Boragininae</taxon>
        <taxon>Borago</taxon>
    </lineage>
</organism>
<name>DES6_BOROF</name>
<proteinExistence type="evidence at protein level"/>
<keyword id="KW-0256">Endoplasmic reticulum</keyword>
<keyword id="KW-0275">Fatty acid biosynthesis</keyword>
<keyword id="KW-0276">Fatty acid metabolism</keyword>
<keyword id="KW-0349">Heme</keyword>
<keyword id="KW-0408">Iron</keyword>
<keyword id="KW-0444">Lipid biosynthesis</keyword>
<keyword id="KW-0443">Lipid metabolism</keyword>
<keyword id="KW-0472">Membrane</keyword>
<keyword id="KW-0479">Metal-binding</keyword>
<keyword id="KW-0560">Oxidoreductase</keyword>
<keyword id="KW-0812">Transmembrane</keyword>
<keyword id="KW-1133">Transmembrane helix</keyword>
<sequence length="448" mass="51635">MAAQIKKYITSDELKNHDKPGDLWISIQGKAYDVSDWVKDHPGGSFPLKSLAGQEVTDAFVAFHPASTWKNLDKFFTGYYLKDYSVSEVSKDYRKLVFEFSKMGLYDKKGHIMFATLCFIAMLFAMSVYGVLFCEGVLVHLFSGCLMGFLWIQSGWIGHDAGHYMVVSDSRLNKFMGIFAANCLSGISIGWWKWNHNAHHIACNSLEYDPDLQYIPFLVVSSKFFGSLTSHFYEKRLTFDSLSRFFVSYQHWTFYPIMCAARLNMYVQSLIMLLTKRNVSYRAHELLGCLVFSIWYPLLVSCLPNWGERIMFVIASLSVTGMQQVQFSLNHFSSSVYVGKPKGNNWFEKQTDGTLDISCPPWMDWFHGGLQFQIEHHLFPKMPRCNLRKISPYVIELCKKHNLPYNYASFSKANEMTLRTLRNTALQARDITKPLPKNLVWEALHTHG</sequence>
<feature type="chain" id="PRO_0000435460" description="Acyl-lipid (9-3)-desaturase">
    <location>
        <begin position="1"/>
        <end position="448"/>
    </location>
</feature>
<feature type="transmembrane region" description="Helical" evidence="1">
    <location>
        <begin position="112"/>
        <end position="132"/>
    </location>
</feature>
<feature type="transmembrane region" description="Helical" evidence="1">
    <location>
        <begin position="137"/>
        <end position="157"/>
    </location>
</feature>
<feature type="transmembrane region" description="Helical" evidence="1">
    <location>
        <begin position="172"/>
        <end position="192"/>
    </location>
</feature>
<feature type="transmembrane region" description="Helical" evidence="1">
    <location>
        <begin position="212"/>
        <end position="232"/>
    </location>
</feature>
<feature type="transmembrane region" description="Helical" evidence="1">
    <location>
        <begin position="254"/>
        <end position="274"/>
    </location>
</feature>
<feature type="transmembrane region" description="Helical" evidence="1">
    <location>
        <begin position="286"/>
        <end position="306"/>
    </location>
</feature>
<feature type="domain" description="Cytochrome b5 heme-binding" evidence="2">
    <location>
        <begin position="6"/>
        <end position="90"/>
    </location>
</feature>
<feature type="short sequence motif" description="Histidine box-1" evidence="5">
    <location>
        <begin position="159"/>
        <end position="163"/>
    </location>
</feature>
<feature type="short sequence motif" description="Histidine box-2" evidence="5">
    <location>
        <begin position="196"/>
        <end position="200"/>
    </location>
</feature>
<feature type="short sequence motif" description="Histidine box-3" evidence="5">
    <location>
        <begin position="373"/>
        <end position="377"/>
    </location>
</feature>
<feature type="binding site" description="axial binding residue" evidence="2">
    <location>
        <position position="41"/>
    </location>
    <ligand>
        <name>heme</name>
        <dbReference type="ChEBI" id="CHEBI:30413"/>
    </ligand>
    <ligandPart>
        <name>Fe</name>
        <dbReference type="ChEBI" id="CHEBI:18248"/>
    </ligandPart>
</feature>
<feature type="binding site" description="axial binding residue" evidence="2">
    <location>
        <position position="64"/>
    </location>
    <ligand>
        <name>heme</name>
        <dbReference type="ChEBI" id="CHEBI:30413"/>
    </ligand>
    <ligandPart>
        <name>Fe</name>
        <dbReference type="ChEBI" id="CHEBI:18248"/>
    </ligandPart>
</feature>